<keyword id="KW-0903">Direct protein sequencing</keyword>
<keyword id="KW-0964">Secreted</keyword>
<protein>
    <recommendedName>
        <fullName evidence="2">Cryptide TyPep-11</fullName>
    </recommendedName>
</protein>
<dbReference type="GO" id="GO:0005576">
    <property type="term" value="C:extracellular region"/>
    <property type="evidence" value="ECO:0007669"/>
    <property type="project" value="UniProtKB-SubCell"/>
</dbReference>
<feature type="peptide" id="PRO_0000461732" description="Cryptide TyPep-11" evidence="1">
    <location>
        <begin position="1"/>
        <end position="7"/>
    </location>
</feature>
<accession>P0DRE2</accession>
<sequence>KPVEPVG</sequence>
<name>CRY11_TITSE</name>
<comment type="function">
    <text evidence="1">In vivo, causes weak pain (but no edema formation), when injected in mice hind paws. Also induces discomfort and anxiety in mice, as it highly increases rearing behavior (but has no effect on locomotion).</text>
</comment>
<comment type="subcellular location">
    <subcellularLocation>
        <location evidence="1">Secreted</location>
    </subcellularLocation>
</comment>
<comment type="tissue specificity">
    <text evidence="3">Expressed by the venom gland.</text>
</comment>
<organism>
    <name type="scientific">Tityus serrulatus</name>
    <name type="common">Brazilian scorpion</name>
    <dbReference type="NCBI Taxonomy" id="6887"/>
    <lineage>
        <taxon>Eukaryota</taxon>
        <taxon>Metazoa</taxon>
        <taxon>Ecdysozoa</taxon>
        <taxon>Arthropoda</taxon>
        <taxon>Chelicerata</taxon>
        <taxon>Arachnida</taxon>
        <taxon>Scorpiones</taxon>
        <taxon>Buthida</taxon>
        <taxon>Buthoidea</taxon>
        <taxon>Buthidae</taxon>
        <taxon>Tityus</taxon>
    </lineage>
</organism>
<evidence type="ECO:0000269" key="1">
    <source>
    </source>
</evidence>
<evidence type="ECO:0000303" key="2">
    <source>
    </source>
</evidence>
<evidence type="ECO:0000305" key="3">
    <source>
    </source>
</evidence>
<proteinExistence type="evidence at protein level"/>
<reference key="1">
    <citation type="journal article" date="2024" name="J. Nat. Prod.">
        <title>Profiling the linear peptides of venom from the Brazilian scorpion Tityus serrulatus: structural and functional characterization.</title>
        <authorList>
            <person name="Dias N.B."/>
            <person name="de Souza B.M."/>
            <person name="Cid-Alda F."/>
            <person name="Dorce V.A.C."/>
            <person name="Cocchi F.K."/>
            <person name="Palma M.S."/>
        </authorList>
    </citation>
    <scope>PROTEIN SEQUENCE</scope>
    <scope>IDENTIFICATION BY MASS SPECTROMETRY</scope>
    <scope>SUBCELLULAR LOCATION</scope>
    <scope>SYNTHESIS</scope>
    <scope>FUNCTION</scope>
    <scope>BIOASSAY</scope>
    <source>
        <tissue>Venom</tissue>
    </source>
</reference>